<feature type="chain" id="PRO_0000175341" description="DNA-directed RNA polymerase subunit alpha">
    <location>
        <begin position="1"/>
        <end position="331"/>
    </location>
</feature>
<feature type="region of interest" description="Alpha N-terminal domain (alpha-NTD)" evidence="1">
    <location>
        <begin position="1"/>
        <end position="242"/>
    </location>
</feature>
<feature type="region of interest" description="Alpha C-terminal domain (alpha-CTD)" evidence="1">
    <location>
        <begin position="258"/>
        <end position="331"/>
    </location>
</feature>
<reference key="1">
    <citation type="journal article" date="2002" name="Nucleic Acids Res.">
        <title>The complete genomic sequence of Mycoplasma penetrans, an intracellular bacterial pathogen in humans.</title>
        <authorList>
            <person name="Sasaki Y."/>
            <person name="Ishikawa J."/>
            <person name="Yamashita A."/>
            <person name="Oshima K."/>
            <person name="Kenri T."/>
            <person name="Furuya K."/>
            <person name="Yoshino C."/>
            <person name="Horino A."/>
            <person name="Shiba T."/>
            <person name="Sasaki T."/>
            <person name="Hattori M."/>
        </authorList>
    </citation>
    <scope>NUCLEOTIDE SEQUENCE [LARGE SCALE GENOMIC DNA]</scope>
    <source>
        <strain>HF-2</strain>
    </source>
</reference>
<protein>
    <recommendedName>
        <fullName evidence="1">DNA-directed RNA polymerase subunit alpha</fullName>
        <shortName evidence="1">RNAP subunit alpha</shortName>
        <ecNumber evidence="1">2.7.7.6</ecNumber>
    </recommendedName>
    <alternativeName>
        <fullName evidence="1">RNA polymerase subunit alpha</fullName>
    </alternativeName>
    <alternativeName>
        <fullName evidence="1">Transcriptase subunit alpha</fullName>
    </alternativeName>
</protein>
<gene>
    <name evidence="1" type="primary">rpoA</name>
    <name type="ordered locus">MYPE9920</name>
</gene>
<comment type="function">
    <text evidence="1">DNA-dependent RNA polymerase catalyzes the transcription of DNA into RNA using the four ribonucleoside triphosphates as substrates.</text>
</comment>
<comment type="catalytic activity">
    <reaction evidence="1">
        <text>RNA(n) + a ribonucleoside 5'-triphosphate = RNA(n+1) + diphosphate</text>
        <dbReference type="Rhea" id="RHEA:21248"/>
        <dbReference type="Rhea" id="RHEA-COMP:14527"/>
        <dbReference type="Rhea" id="RHEA-COMP:17342"/>
        <dbReference type="ChEBI" id="CHEBI:33019"/>
        <dbReference type="ChEBI" id="CHEBI:61557"/>
        <dbReference type="ChEBI" id="CHEBI:140395"/>
        <dbReference type="EC" id="2.7.7.6"/>
    </reaction>
</comment>
<comment type="subunit">
    <text evidence="1">Homodimer. The RNAP catalytic core consists of 2 alpha, 1 beta, 1 beta' and 1 omega subunit. When a sigma factor is associated with the core the holoenzyme is formed, which can initiate transcription.</text>
</comment>
<comment type="domain">
    <text evidence="1">The N-terminal domain is essential for RNAP assembly and basal transcription, whereas the C-terminal domain is involved in interaction with transcriptional regulators and with upstream promoter elements.</text>
</comment>
<comment type="similarity">
    <text evidence="1">Belongs to the RNA polymerase alpha chain family.</text>
</comment>
<accession>Q8EUD7</accession>
<sequence length="331" mass="37331">MEKFLRYNIQIGKDQNKDADYGVFVFKPLERGFGHTLGNSLRRVLLSNIIGHSLFAIKIPNVSHEFQSIKGVKEDLTQIILNLKRLVVKIDQEIFGEEEQKETSLEKWPTLKIDFSKGGVLKASDIETPVGFEIINKDMYIATIESGVKFKMELFVKTGRGFTTFSENKELINAINVIAVDSNFSPVLKVGYKVSDIKTTKNEINDVLELEVATNGAVSAAEAVAMSAKILLEHYKPIVTELFDNYNDLRIINEEATVSSSKSSLAISIDELELSVRSYNCLKRAGIHTITQLTDKTKGEIEKIRNLGKKSFKEIIKKIQDRNLKLKEEQN</sequence>
<keyword id="KW-0240">DNA-directed RNA polymerase</keyword>
<keyword id="KW-0548">Nucleotidyltransferase</keyword>
<keyword id="KW-1185">Reference proteome</keyword>
<keyword id="KW-0804">Transcription</keyword>
<keyword id="KW-0808">Transferase</keyword>
<organism>
    <name type="scientific">Malacoplasma penetrans (strain HF-2)</name>
    <name type="common">Mycoplasma penetrans</name>
    <dbReference type="NCBI Taxonomy" id="272633"/>
    <lineage>
        <taxon>Bacteria</taxon>
        <taxon>Bacillati</taxon>
        <taxon>Mycoplasmatota</taxon>
        <taxon>Mycoplasmoidales</taxon>
        <taxon>Mycoplasmoidaceae</taxon>
        <taxon>Malacoplasma</taxon>
    </lineage>
</organism>
<evidence type="ECO:0000255" key="1">
    <source>
        <dbReference type="HAMAP-Rule" id="MF_00059"/>
    </source>
</evidence>
<name>RPOA_MALP2</name>
<dbReference type="EC" id="2.7.7.6" evidence="1"/>
<dbReference type="EMBL" id="BA000026">
    <property type="protein sequence ID" value="BAC44778.1"/>
    <property type="molecule type" value="Genomic_DNA"/>
</dbReference>
<dbReference type="RefSeq" id="WP_011077806.1">
    <property type="nucleotide sequence ID" value="NC_004432.1"/>
</dbReference>
<dbReference type="SMR" id="Q8EUD7"/>
<dbReference type="FunCoup" id="Q8EUD7">
    <property type="interactions" value="199"/>
</dbReference>
<dbReference type="STRING" id="272633.gene:10732112"/>
<dbReference type="KEGG" id="mpe:MYPE9920"/>
<dbReference type="eggNOG" id="COG0202">
    <property type="taxonomic scope" value="Bacteria"/>
</dbReference>
<dbReference type="HOGENOM" id="CLU_053084_0_1_14"/>
<dbReference type="InParanoid" id="Q8EUD7"/>
<dbReference type="Proteomes" id="UP000002522">
    <property type="component" value="Chromosome"/>
</dbReference>
<dbReference type="GO" id="GO:0005737">
    <property type="term" value="C:cytoplasm"/>
    <property type="evidence" value="ECO:0007669"/>
    <property type="project" value="UniProtKB-ARBA"/>
</dbReference>
<dbReference type="GO" id="GO:0000428">
    <property type="term" value="C:DNA-directed RNA polymerase complex"/>
    <property type="evidence" value="ECO:0007669"/>
    <property type="project" value="UniProtKB-KW"/>
</dbReference>
<dbReference type="GO" id="GO:0003677">
    <property type="term" value="F:DNA binding"/>
    <property type="evidence" value="ECO:0007669"/>
    <property type="project" value="UniProtKB-UniRule"/>
</dbReference>
<dbReference type="GO" id="GO:0003899">
    <property type="term" value="F:DNA-directed RNA polymerase activity"/>
    <property type="evidence" value="ECO:0007669"/>
    <property type="project" value="UniProtKB-UniRule"/>
</dbReference>
<dbReference type="GO" id="GO:0046983">
    <property type="term" value="F:protein dimerization activity"/>
    <property type="evidence" value="ECO:0007669"/>
    <property type="project" value="InterPro"/>
</dbReference>
<dbReference type="GO" id="GO:0006351">
    <property type="term" value="P:DNA-templated transcription"/>
    <property type="evidence" value="ECO:0007669"/>
    <property type="project" value="UniProtKB-UniRule"/>
</dbReference>
<dbReference type="CDD" id="cd06928">
    <property type="entry name" value="RNAP_alpha_NTD"/>
    <property type="match status" value="1"/>
</dbReference>
<dbReference type="FunFam" id="2.170.120.12:FF:000001">
    <property type="entry name" value="DNA-directed RNA polymerase subunit alpha"/>
    <property type="match status" value="1"/>
</dbReference>
<dbReference type="Gene3D" id="1.10.150.20">
    <property type="entry name" value="5' to 3' exonuclease, C-terminal subdomain"/>
    <property type="match status" value="1"/>
</dbReference>
<dbReference type="Gene3D" id="2.170.120.12">
    <property type="entry name" value="DNA-directed RNA polymerase, insert domain"/>
    <property type="match status" value="1"/>
</dbReference>
<dbReference type="Gene3D" id="3.30.1360.10">
    <property type="entry name" value="RNA polymerase, RBP11-like subunit"/>
    <property type="match status" value="1"/>
</dbReference>
<dbReference type="HAMAP" id="MF_00059">
    <property type="entry name" value="RNApol_bact_RpoA"/>
    <property type="match status" value="1"/>
</dbReference>
<dbReference type="InterPro" id="IPR011262">
    <property type="entry name" value="DNA-dir_RNA_pol_insert"/>
</dbReference>
<dbReference type="InterPro" id="IPR011263">
    <property type="entry name" value="DNA-dir_RNA_pol_RpoA/D/Rpb3"/>
</dbReference>
<dbReference type="InterPro" id="IPR011773">
    <property type="entry name" value="DNA-dir_RpoA"/>
</dbReference>
<dbReference type="InterPro" id="IPR036603">
    <property type="entry name" value="RBP11-like"/>
</dbReference>
<dbReference type="InterPro" id="IPR011260">
    <property type="entry name" value="RNAP_asu_C"/>
</dbReference>
<dbReference type="InterPro" id="IPR036643">
    <property type="entry name" value="RNApol_insert_sf"/>
</dbReference>
<dbReference type="NCBIfam" id="NF003519">
    <property type="entry name" value="PRK05182.2-5"/>
    <property type="match status" value="1"/>
</dbReference>
<dbReference type="NCBIfam" id="TIGR02027">
    <property type="entry name" value="rpoA"/>
    <property type="match status" value="1"/>
</dbReference>
<dbReference type="Pfam" id="PF01000">
    <property type="entry name" value="RNA_pol_A_bac"/>
    <property type="match status" value="1"/>
</dbReference>
<dbReference type="Pfam" id="PF03118">
    <property type="entry name" value="RNA_pol_A_CTD"/>
    <property type="match status" value="1"/>
</dbReference>
<dbReference type="Pfam" id="PF01193">
    <property type="entry name" value="RNA_pol_L"/>
    <property type="match status" value="1"/>
</dbReference>
<dbReference type="SMART" id="SM00662">
    <property type="entry name" value="RPOLD"/>
    <property type="match status" value="1"/>
</dbReference>
<dbReference type="SUPFAM" id="SSF47789">
    <property type="entry name" value="C-terminal domain of RNA polymerase alpha subunit"/>
    <property type="match status" value="1"/>
</dbReference>
<dbReference type="SUPFAM" id="SSF56553">
    <property type="entry name" value="Insert subdomain of RNA polymerase alpha subunit"/>
    <property type="match status" value="1"/>
</dbReference>
<dbReference type="SUPFAM" id="SSF55257">
    <property type="entry name" value="RBP11-like subunits of RNA polymerase"/>
    <property type="match status" value="1"/>
</dbReference>
<proteinExistence type="inferred from homology"/>